<name>ULAE_ECO5E</name>
<gene>
    <name evidence="1" type="primary">ulaE</name>
    <name type="ordered locus">ECH74115_5713</name>
</gene>
<sequence length="284" mass="32017">MLSKQIPLGIYEKALPAGECWLERLQLAKTLGFDFVEMSVDETDERLSRLDWSREQRLALVNAIVETGVRVPSMCLSAHRRFPLGSEDDAVRAQGLEIMRKAIQFAQDVGIRVIQLAGYDVYYQEANNETRRRFRDGLKESVEMASRAQVTLAVEIMDYPLMNSISKALGYAHYLNNPWFQLYPDIGNLSAWDNDVQMELQAGIGHIVAVHVKDTKPGVFKNVPFGEGVVDFERCFETLKQSGYCGPYLIEMWSETAEDPAAEVAKARDWVKARMAKAGMVEAA</sequence>
<accession>B5Z2K3</accession>
<reference key="1">
    <citation type="journal article" date="2011" name="Proc. Natl. Acad. Sci. U.S.A.">
        <title>Genomic anatomy of Escherichia coli O157:H7 outbreaks.</title>
        <authorList>
            <person name="Eppinger M."/>
            <person name="Mammel M.K."/>
            <person name="Leclerc J.E."/>
            <person name="Ravel J."/>
            <person name="Cebula T.A."/>
        </authorList>
    </citation>
    <scope>NUCLEOTIDE SEQUENCE [LARGE SCALE GENOMIC DNA]</scope>
    <source>
        <strain>EC4115 / EHEC</strain>
    </source>
</reference>
<protein>
    <recommendedName>
        <fullName evidence="1">L-ribulose-5-phosphate 3-epimerase UlaE</fullName>
        <ecNumber evidence="1">5.1.3.22</ecNumber>
    </recommendedName>
    <alternativeName>
        <fullName evidence="1">L-ascorbate utilization protein E</fullName>
    </alternativeName>
    <alternativeName>
        <fullName evidence="1">L-xylulose-5-phosphate 3-epimerase</fullName>
    </alternativeName>
</protein>
<feature type="chain" id="PRO_1000188823" description="L-ribulose-5-phosphate 3-epimerase UlaE">
    <location>
        <begin position="1"/>
        <end position="284"/>
    </location>
</feature>
<proteinExistence type="inferred from homology"/>
<evidence type="ECO:0000255" key="1">
    <source>
        <dbReference type="HAMAP-Rule" id="MF_01951"/>
    </source>
</evidence>
<keyword id="KW-0413">Isomerase</keyword>
<dbReference type="EC" id="5.1.3.22" evidence="1"/>
<dbReference type="EMBL" id="CP001164">
    <property type="protein sequence ID" value="ACI35119.1"/>
    <property type="molecule type" value="Genomic_DNA"/>
</dbReference>
<dbReference type="RefSeq" id="WP_000949515.1">
    <property type="nucleotide sequence ID" value="NC_011353.1"/>
</dbReference>
<dbReference type="SMR" id="B5Z2K3"/>
<dbReference type="KEGG" id="ecf:ECH74115_5713"/>
<dbReference type="HOGENOM" id="CLU_082738_0_0_6"/>
<dbReference type="UniPathway" id="UPA00263">
    <property type="reaction ID" value="UER00379"/>
</dbReference>
<dbReference type="GO" id="GO:0016861">
    <property type="term" value="F:intramolecular oxidoreductase activity, interconverting aldoses and ketoses"/>
    <property type="evidence" value="ECO:0007669"/>
    <property type="project" value="InterPro"/>
</dbReference>
<dbReference type="GO" id="GO:0034015">
    <property type="term" value="F:L-ribulose-5-phosphate 3-epimerase activity"/>
    <property type="evidence" value="ECO:0007669"/>
    <property type="project" value="UniProtKB-UniRule"/>
</dbReference>
<dbReference type="GO" id="GO:0019854">
    <property type="term" value="P:L-ascorbic acid catabolic process"/>
    <property type="evidence" value="ECO:0007669"/>
    <property type="project" value="UniProtKB-UniRule"/>
</dbReference>
<dbReference type="FunFam" id="3.20.20.150:FF:000003">
    <property type="entry name" value="L-ribulose-5-phosphate 3-epimerase UlaE"/>
    <property type="match status" value="1"/>
</dbReference>
<dbReference type="Gene3D" id="3.20.20.150">
    <property type="entry name" value="Divalent-metal-dependent TIM barrel enzymes"/>
    <property type="match status" value="1"/>
</dbReference>
<dbReference type="HAMAP" id="MF_01951">
    <property type="entry name" value="UlaE"/>
    <property type="match status" value="1"/>
</dbReference>
<dbReference type="InterPro" id="IPR004560">
    <property type="entry name" value="L-Ru-5P_3-Epase"/>
</dbReference>
<dbReference type="InterPro" id="IPR023492">
    <property type="entry name" value="L-Ru-5P_3-Epase_Enterobacteria"/>
</dbReference>
<dbReference type="InterPro" id="IPR050417">
    <property type="entry name" value="Sugar_Epim/Isomerase"/>
</dbReference>
<dbReference type="InterPro" id="IPR036237">
    <property type="entry name" value="Xyl_isomerase-like_sf"/>
</dbReference>
<dbReference type="InterPro" id="IPR013022">
    <property type="entry name" value="Xyl_isomerase-like_TIM-brl"/>
</dbReference>
<dbReference type="NCBIfam" id="TIGR00542">
    <property type="entry name" value="hxl6Piso_put"/>
    <property type="match status" value="1"/>
</dbReference>
<dbReference type="NCBIfam" id="NF009688">
    <property type="entry name" value="PRK13209.1"/>
    <property type="match status" value="1"/>
</dbReference>
<dbReference type="NCBIfam" id="NF009689">
    <property type="entry name" value="PRK13210.1"/>
    <property type="match status" value="1"/>
</dbReference>
<dbReference type="PANTHER" id="PTHR43489">
    <property type="entry name" value="ISOMERASE"/>
    <property type="match status" value="1"/>
</dbReference>
<dbReference type="PANTHER" id="PTHR43489:SF8">
    <property type="entry name" value="L-RIBULOSE-5-PHOSPHATE 3-EPIMERASE ULAE"/>
    <property type="match status" value="1"/>
</dbReference>
<dbReference type="Pfam" id="PF01261">
    <property type="entry name" value="AP_endonuc_2"/>
    <property type="match status" value="1"/>
</dbReference>
<dbReference type="SUPFAM" id="SSF51658">
    <property type="entry name" value="Xylose isomerase-like"/>
    <property type="match status" value="1"/>
</dbReference>
<organism>
    <name type="scientific">Escherichia coli O157:H7 (strain EC4115 / EHEC)</name>
    <dbReference type="NCBI Taxonomy" id="444450"/>
    <lineage>
        <taxon>Bacteria</taxon>
        <taxon>Pseudomonadati</taxon>
        <taxon>Pseudomonadota</taxon>
        <taxon>Gammaproteobacteria</taxon>
        <taxon>Enterobacterales</taxon>
        <taxon>Enterobacteriaceae</taxon>
        <taxon>Escherichia</taxon>
    </lineage>
</organism>
<comment type="function">
    <text evidence="1">Catalyzes the isomerization of L-xylulose-5-phosphate to L-ribulose-5-phosphate. Is involved in the anaerobic L-ascorbate utilization.</text>
</comment>
<comment type="catalytic activity">
    <reaction evidence="1">
        <text>L-ribulose 5-phosphate = L-xylulose 5-phosphate</text>
        <dbReference type="Rhea" id="RHEA:18497"/>
        <dbReference type="ChEBI" id="CHEBI:57829"/>
        <dbReference type="ChEBI" id="CHEBI:58226"/>
        <dbReference type="EC" id="5.1.3.22"/>
    </reaction>
</comment>
<comment type="pathway">
    <text evidence="1">Cofactor degradation; L-ascorbate degradation; D-xylulose 5-phosphate from L-ascorbate: step 3/4.</text>
</comment>
<comment type="induction">
    <text evidence="1">Induced by L-ascorbate. Repressed by UlaR.</text>
</comment>
<comment type="similarity">
    <text evidence="1">Belongs to the L-ribulose-5-phosphate 3-epimerase family.</text>
</comment>